<comment type="subcellular location">
    <subcellularLocation>
        <location evidence="1">Secreted</location>
        <location evidence="1">Cell wall</location>
    </subcellularLocation>
</comment>
<accession>P80754</accession>
<dbReference type="GO" id="GO:0005576">
    <property type="term" value="C:extracellular region"/>
    <property type="evidence" value="ECO:0007669"/>
    <property type="project" value="UniProtKB-KW"/>
</dbReference>
<keyword id="KW-0134">Cell wall</keyword>
<keyword id="KW-0903">Direct protein sequencing</keyword>
<keyword id="KW-0964">Secreted</keyword>
<reference evidence="3" key="1">
    <citation type="journal article" date="1997" name="J. Biol. Chem.">
        <title>Differential extraction and protein sequencing reveals major differences in patterns of primary cell wall proteins from plants.</title>
        <authorList>
            <person name="Robertson D."/>
            <person name="Mitchell G.P."/>
            <person name="Gilroy J.S."/>
            <person name="Gerrish C."/>
            <person name="Bolwell G.P."/>
            <person name="Slabas A.R."/>
        </authorList>
    </citation>
    <scope>PROTEIN SEQUENCE</scope>
    <scope>SUBCELLULAR LOCATION</scope>
</reference>
<evidence type="ECO:0000269" key="1">
    <source>
    </source>
</evidence>
<evidence type="ECO:0000303" key="2">
    <source>
    </source>
</evidence>
<evidence type="ECO:0000305" key="3"/>
<name>CWP04_DAUCA</name>
<protein>
    <recommendedName>
        <fullName>43 kDa cell wall protein</fullName>
    </recommendedName>
</protein>
<proteinExistence type="evidence at protein level"/>
<feature type="chain" id="PRO_0000079632" description="43 kDa cell wall protein">
    <location>
        <begin position="1"/>
        <end position="14" status="greater than"/>
    </location>
</feature>
<feature type="non-terminal residue" evidence="2">
    <location>
        <position position="14"/>
    </location>
</feature>
<organism>
    <name type="scientific">Daucus carota</name>
    <name type="common">Wild carrot</name>
    <dbReference type="NCBI Taxonomy" id="4039"/>
    <lineage>
        <taxon>Eukaryota</taxon>
        <taxon>Viridiplantae</taxon>
        <taxon>Streptophyta</taxon>
        <taxon>Embryophyta</taxon>
        <taxon>Tracheophyta</taxon>
        <taxon>Spermatophyta</taxon>
        <taxon>Magnoliopsida</taxon>
        <taxon>eudicotyledons</taxon>
        <taxon>Gunneridae</taxon>
        <taxon>Pentapetalae</taxon>
        <taxon>asterids</taxon>
        <taxon>campanulids</taxon>
        <taxon>Apiales</taxon>
        <taxon>Apiaceae</taxon>
        <taxon>Apioideae</taxon>
        <taxon>Scandiceae</taxon>
        <taxon>Daucinae</taxon>
        <taxon>Daucus</taxon>
        <taxon>Daucus sect. Daucus</taxon>
    </lineage>
</organism>
<sequence>GVREDTYPDVVXTA</sequence>